<evidence type="ECO:0000305" key="1"/>
<reference key="1">
    <citation type="journal article" date="1983" name="Proc. Natl. Acad. Sci. U.S.A.">
        <title>Rabbit immunoglobulin kappa genes: structure of a germline b4 allotype J-C locus and evidence for several b4-related sequences in the rabbit genome.</title>
        <authorList>
            <person name="Emorine L."/>
            <person name="Dreher K.L."/>
            <person name="Kindt T.J."/>
            <person name="Max E.E."/>
        </authorList>
    </citation>
    <scope>NUCLEOTIDE SEQUENCE [GENOMIC DNA]</scope>
</reference>
<reference key="2">
    <citation type="journal article" date="1981" name="Proc. Natl. Acad. Sci. U.S.A.">
        <title>Nucleotide sequence of constant and 3' untranslated regions of a kappa immunoglobulin light chain mRNA of a homozygous b4 rabbit.</title>
        <authorList>
            <person name="Heidmann O."/>
            <person name="Auffray C."/>
            <person name="Cazenave P.-A."/>
            <person name="Rougeon F."/>
        </authorList>
    </citation>
    <scope>NUCLEOTIDE SEQUENCE [GENOMIC DNA]</scope>
</reference>
<reference key="3">
    <citation type="journal article" date="1975" name="J. Biol. Chem.">
        <title>Primary structure of the L chain from a rabbit homogeneous antibody to streptococcal carbohydrate. II. Sequence determination of peptides from tryptic and peptic digests.</title>
        <authorList>
            <person name="Chen K.C.S."/>
            <person name="Kindt T.J."/>
            <person name="Krause R.M."/>
        </authorList>
    </citation>
    <scope>PROTEIN SEQUENCE</scope>
</reference>
<feature type="chain" id="PRO_0000153599" description="Ig kappa-b4 chain C region">
    <location>
        <begin position="1" status="less than"/>
        <end position="103"/>
    </location>
</feature>
<feature type="domain" description="Ig-like">
    <location>
        <begin position="5"/>
        <end position="95"/>
    </location>
</feature>
<feature type="disulfide bond">
    <location>
        <begin position="26"/>
        <end position="85"/>
    </location>
</feature>
<feature type="disulfide bond" description="Interchain (with a heavy chain)">
    <location>
        <position position="103"/>
    </location>
</feature>
<feature type="sequence conflict" description="In Ref. 3; AA sequence." evidence="1" ref="3">
    <original>N</original>
    <variation>D</variation>
    <location>
        <position position="58"/>
    </location>
</feature>
<feature type="non-terminal residue">
    <location>
        <position position="1"/>
    </location>
</feature>
<dbReference type="EMBL" id="X00231">
    <property type="protein sequence ID" value="CAA25051.1"/>
    <property type="molecule type" value="Genomic_DNA"/>
</dbReference>
<dbReference type="PIR" id="A93971">
    <property type="entry name" value="K4RB"/>
</dbReference>
<dbReference type="PDB" id="6DID">
    <property type="method" value="EM"/>
    <property type="resolution" value="4.71 A"/>
    <property type="chains" value="C/E/H=1-103"/>
</dbReference>
<dbReference type="PDBsum" id="6DID"/>
<dbReference type="EMDB" id="EMD-7896"/>
<dbReference type="SMR" id="P01840"/>
<dbReference type="FunCoup" id="P01840">
    <property type="interactions" value="58"/>
</dbReference>
<dbReference type="InParanoid" id="P01840"/>
<dbReference type="Proteomes" id="UP000001811">
    <property type="component" value="Unplaced"/>
</dbReference>
<dbReference type="FunFam" id="2.60.40.10:FF:000283">
    <property type="entry name" value="Immunoglobulin kappa constant"/>
    <property type="match status" value="1"/>
</dbReference>
<dbReference type="Gene3D" id="2.60.40.10">
    <property type="entry name" value="Immunoglobulins"/>
    <property type="match status" value="1"/>
</dbReference>
<dbReference type="InterPro" id="IPR007110">
    <property type="entry name" value="Ig-like_dom"/>
</dbReference>
<dbReference type="InterPro" id="IPR036179">
    <property type="entry name" value="Ig-like_dom_sf"/>
</dbReference>
<dbReference type="InterPro" id="IPR013783">
    <property type="entry name" value="Ig-like_fold"/>
</dbReference>
<dbReference type="InterPro" id="IPR003597">
    <property type="entry name" value="Ig_C1-set"/>
</dbReference>
<dbReference type="InterPro" id="IPR050380">
    <property type="entry name" value="Immune_Resp_Modulators"/>
</dbReference>
<dbReference type="PANTHER" id="PTHR23411">
    <property type="entry name" value="TAPASIN"/>
    <property type="match status" value="1"/>
</dbReference>
<dbReference type="Pfam" id="PF07654">
    <property type="entry name" value="C1-set"/>
    <property type="match status" value="1"/>
</dbReference>
<dbReference type="SMART" id="SM00407">
    <property type="entry name" value="IGc1"/>
    <property type="match status" value="1"/>
</dbReference>
<dbReference type="SUPFAM" id="SSF48726">
    <property type="entry name" value="Immunoglobulin"/>
    <property type="match status" value="1"/>
</dbReference>
<dbReference type="PROSITE" id="PS50835">
    <property type="entry name" value="IG_LIKE"/>
    <property type="match status" value="1"/>
</dbReference>
<keyword id="KW-0002">3D-structure</keyword>
<keyword id="KW-0903">Direct protein sequencing</keyword>
<keyword id="KW-1015">Disulfide bond</keyword>
<keyword id="KW-0393">Immunoglobulin domain</keyword>
<keyword id="KW-1185">Reference proteome</keyword>
<protein>
    <recommendedName>
        <fullName>Ig kappa-b4 chain C region</fullName>
    </recommendedName>
</protein>
<organism>
    <name type="scientific">Oryctolagus cuniculus</name>
    <name type="common">Rabbit</name>
    <dbReference type="NCBI Taxonomy" id="9986"/>
    <lineage>
        <taxon>Eukaryota</taxon>
        <taxon>Metazoa</taxon>
        <taxon>Chordata</taxon>
        <taxon>Craniata</taxon>
        <taxon>Vertebrata</taxon>
        <taxon>Euteleostomi</taxon>
        <taxon>Mammalia</taxon>
        <taxon>Eutheria</taxon>
        <taxon>Euarchontoglires</taxon>
        <taxon>Glires</taxon>
        <taxon>Lagomorpha</taxon>
        <taxon>Leporidae</taxon>
        <taxon>Oryctolagus</taxon>
    </lineage>
</organism>
<name>KAC4_RABIT</name>
<comment type="miscellaneous">
    <text>This chain was obtained from antibody to the specific carbohydrate of group C Streptococci and was isolated from the serum of a single rabbit.</text>
</comment>
<accession>P01840</accession>
<proteinExistence type="evidence at protein level"/>
<sequence length="103" mass="11043">DPVAPTVLIFPPAADQVATGTVTIVCVANKYFPDVTVTWEVDGTTQTTGIENSKTPQNSADCTYNLSSTLTLTSTQYNSHKEYTCKVTQGTTSVVQSFNRGDC</sequence>